<sequence>MSSLLLFNDKSRALQADIVAVQSQVVYGSVGNSIAVPAIKQNGLNVFAVPTVLLSNTPHYDTFYGGAIPDEWFSGYLRALQERDALRQLRAVTTGYMGTASQIKILAEWLTALRKDHPDLLIMVDPVIGDIDSGIYVKPDLPEAYRQYLLPLAQGITPNIFELEILTGKNCRDLDSAIAAAKSLLSDTLKWVVVTSASGNEENQEMQVVVVTADSVNVISHSRVKTDLKGTGDLFCAQLISGLLKGKALTDAVHRAGLRVLEVMRYTQQHESDELILPPLAEA</sequence>
<comment type="function">
    <text evidence="1">B6-vitamer kinase involved in the salvage pathway of pyridoxal 5'-phosphate (PLP). Catalyzes the phosphorylation of pyridoxine (PN), pyridoxal (PL), and pyridoxamine (PM), forming their respective 5'-phosphorylated esters, i.e. PNP, PLP and PMP.</text>
</comment>
<comment type="catalytic activity">
    <reaction evidence="1">
        <text>pyridoxal + ATP = pyridoxal 5'-phosphate + ADP + H(+)</text>
        <dbReference type="Rhea" id="RHEA:10224"/>
        <dbReference type="ChEBI" id="CHEBI:15378"/>
        <dbReference type="ChEBI" id="CHEBI:17310"/>
        <dbReference type="ChEBI" id="CHEBI:30616"/>
        <dbReference type="ChEBI" id="CHEBI:456216"/>
        <dbReference type="ChEBI" id="CHEBI:597326"/>
        <dbReference type="EC" id="2.7.1.35"/>
    </reaction>
</comment>
<comment type="catalytic activity">
    <reaction evidence="1">
        <text>pyridoxine + ATP = pyridoxine 5'-phosphate + ADP + H(+)</text>
        <dbReference type="Rhea" id="RHEA:25108"/>
        <dbReference type="ChEBI" id="CHEBI:15378"/>
        <dbReference type="ChEBI" id="CHEBI:16709"/>
        <dbReference type="ChEBI" id="CHEBI:30616"/>
        <dbReference type="ChEBI" id="CHEBI:58589"/>
        <dbReference type="ChEBI" id="CHEBI:456216"/>
        <dbReference type="EC" id="2.7.1.35"/>
    </reaction>
</comment>
<comment type="catalytic activity">
    <reaction evidence="1">
        <text>pyridoxamine + ATP = pyridoxamine 5'-phosphate + ADP + H(+)</text>
        <dbReference type="Rhea" id="RHEA:25104"/>
        <dbReference type="ChEBI" id="CHEBI:15378"/>
        <dbReference type="ChEBI" id="CHEBI:30616"/>
        <dbReference type="ChEBI" id="CHEBI:57761"/>
        <dbReference type="ChEBI" id="CHEBI:58451"/>
        <dbReference type="ChEBI" id="CHEBI:456216"/>
        <dbReference type="EC" id="2.7.1.35"/>
    </reaction>
</comment>
<comment type="cofactor">
    <cofactor evidence="1">
        <name>Mg(2+)</name>
        <dbReference type="ChEBI" id="CHEBI:18420"/>
    </cofactor>
</comment>
<comment type="pathway">
    <text evidence="1">Cofactor metabolism; pyridoxal 5'-phosphate salvage; pyridoxal 5'-phosphate from pyridoxal: step 1/1.</text>
</comment>
<comment type="pathway">
    <text evidence="1">Cofactor metabolism; pyridoxal 5'-phosphate salvage; pyridoxine 5'-phosphate from pyridoxine: step 1/1.</text>
</comment>
<comment type="pathway">
    <text evidence="1">Cofactor metabolism; pyridoxal 5'-phosphate salvage; pyridoxamine 5'-phosphate from pyridoxamine: step 1/1.</text>
</comment>
<comment type="subunit">
    <text evidence="1">Homodimer.</text>
</comment>
<comment type="similarity">
    <text evidence="1">Belongs to the pyridoxine kinase family. PdxK subfamily.</text>
</comment>
<evidence type="ECO:0000255" key="1">
    <source>
        <dbReference type="HAMAP-Rule" id="MF_01638"/>
    </source>
</evidence>
<dbReference type="EC" id="2.7.1.35" evidence="1"/>
<dbReference type="EMBL" id="CP000802">
    <property type="protein sequence ID" value="ABV06818.1"/>
    <property type="molecule type" value="Genomic_DNA"/>
</dbReference>
<dbReference type="RefSeq" id="WP_000096674.1">
    <property type="nucleotide sequence ID" value="NC_009800.1"/>
</dbReference>
<dbReference type="SMR" id="A8A2R4"/>
<dbReference type="KEGG" id="ecx:EcHS_A2553"/>
<dbReference type="HOGENOM" id="CLU_046496_3_1_6"/>
<dbReference type="UniPathway" id="UPA01068">
    <property type="reaction ID" value="UER00298"/>
</dbReference>
<dbReference type="UniPathway" id="UPA01068">
    <property type="reaction ID" value="UER00299"/>
</dbReference>
<dbReference type="UniPathway" id="UPA01068">
    <property type="reaction ID" value="UER00300"/>
</dbReference>
<dbReference type="GO" id="GO:0005829">
    <property type="term" value="C:cytosol"/>
    <property type="evidence" value="ECO:0007669"/>
    <property type="project" value="TreeGrafter"/>
</dbReference>
<dbReference type="GO" id="GO:0005524">
    <property type="term" value="F:ATP binding"/>
    <property type="evidence" value="ECO:0007669"/>
    <property type="project" value="UniProtKB-UniRule"/>
</dbReference>
<dbReference type="GO" id="GO:0008902">
    <property type="term" value="F:hydroxymethylpyrimidine kinase activity"/>
    <property type="evidence" value="ECO:0007669"/>
    <property type="project" value="TreeGrafter"/>
</dbReference>
<dbReference type="GO" id="GO:0000287">
    <property type="term" value="F:magnesium ion binding"/>
    <property type="evidence" value="ECO:0007669"/>
    <property type="project" value="UniProtKB-UniRule"/>
</dbReference>
<dbReference type="GO" id="GO:0008478">
    <property type="term" value="F:pyridoxal kinase activity"/>
    <property type="evidence" value="ECO:0007669"/>
    <property type="project" value="UniProtKB-UniRule"/>
</dbReference>
<dbReference type="GO" id="GO:0008270">
    <property type="term" value="F:zinc ion binding"/>
    <property type="evidence" value="ECO:0007669"/>
    <property type="project" value="UniProtKB-UniRule"/>
</dbReference>
<dbReference type="GO" id="GO:0009443">
    <property type="term" value="P:pyridoxal 5'-phosphate salvage"/>
    <property type="evidence" value="ECO:0007669"/>
    <property type="project" value="UniProtKB-UniRule"/>
</dbReference>
<dbReference type="CDD" id="cd01173">
    <property type="entry name" value="pyridoxal_pyridoxamine_kinase"/>
    <property type="match status" value="1"/>
</dbReference>
<dbReference type="FunFam" id="3.40.1190.20:FF:000009">
    <property type="entry name" value="Pyridoxine/pyridoxal/pyridoxamine kinase"/>
    <property type="match status" value="1"/>
</dbReference>
<dbReference type="Gene3D" id="3.40.1190.20">
    <property type="match status" value="1"/>
</dbReference>
<dbReference type="HAMAP" id="MF_01638">
    <property type="entry name" value="PdxK"/>
    <property type="match status" value="1"/>
</dbReference>
<dbReference type="InterPro" id="IPR023479">
    <property type="entry name" value="PdxK"/>
</dbReference>
<dbReference type="InterPro" id="IPR013749">
    <property type="entry name" value="PM/HMP-P_kinase-1"/>
</dbReference>
<dbReference type="InterPro" id="IPR004625">
    <property type="entry name" value="PyrdxlKinase"/>
</dbReference>
<dbReference type="InterPro" id="IPR029056">
    <property type="entry name" value="Ribokinase-like"/>
</dbReference>
<dbReference type="NCBIfam" id="NF006034">
    <property type="entry name" value="PRK08176.1"/>
    <property type="match status" value="1"/>
</dbReference>
<dbReference type="NCBIfam" id="TIGR00687">
    <property type="entry name" value="pyridox_kin"/>
    <property type="match status" value="1"/>
</dbReference>
<dbReference type="PANTHER" id="PTHR10534">
    <property type="entry name" value="PYRIDOXAL KINASE"/>
    <property type="match status" value="1"/>
</dbReference>
<dbReference type="PANTHER" id="PTHR10534:SF15">
    <property type="entry name" value="PYRIDOXINE_PYRIDOXAL_PYRIDOXAMINE KINASE"/>
    <property type="match status" value="1"/>
</dbReference>
<dbReference type="Pfam" id="PF08543">
    <property type="entry name" value="Phos_pyr_kin"/>
    <property type="match status" value="1"/>
</dbReference>
<dbReference type="SUPFAM" id="SSF53613">
    <property type="entry name" value="Ribokinase-like"/>
    <property type="match status" value="1"/>
</dbReference>
<feature type="chain" id="PRO_1000069882" description="Pyridoxine/pyridoxal/pyridoxamine kinase">
    <location>
        <begin position="1"/>
        <end position="283"/>
    </location>
</feature>
<feature type="binding site" evidence="1">
    <location>
        <position position="23"/>
    </location>
    <ligand>
        <name>substrate</name>
    </ligand>
</feature>
<feature type="binding site" evidence="1">
    <location>
        <position position="59"/>
    </location>
    <ligand>
        <name>substrate</name>
    </ligand>
</feature>
<feature type="binding site" evidence="1">
    <location>
        <position position="125"/>
    </location>
    <ligand>
        <name>ATP</name>
        <dbReference type="ChEBI" id="CHEBI:30616"/>
    </ligand>
</feature>
<feature type="binding site" evidence="1">
    <location>
        <position position="136"/>
    </location>
    <ligand>
        <name>Mg(2+)</name>
        <dbReference type="ChEBI" id="CHEBI:18420"/>
    </ligand>
</feature>
<feature type="binding site" evidence="1">
    <location>
        <position position="157"/>
    </location>
    <ligand>
        <name>ATP</name>
        <dbReference type="ChEBI" id="CHEBI:30616"/>
    </ligand>
</feature>
<feature type="binding site" evidence="1">
    <location>
        <position position="162"/>
    </location>
    <ligand>
        <name>ATP</name>
        <dbReference type="ChEBI" id="CHEBI:30616"/>
    </ligand>
</feature>
<feature type="binding site" evidence="1">
    <location>
        <position position="162"/>
    </location>
    <ligand>
        <name>Mg(2+)</name>
        <dbReference type="ChEBI" id="CHEBI:18420"/>
    </ligand>
</feature>
<feature type="binding site" evidence="1">
    <location>
        <position position="195"/>
    </location>
    <ligand>
        <name>ATP</name>
        <dbReference type="ChEBI" id="CHEBI:30616"/>
    </ligand>
</feature>
<feature type="binding site" evidence="1">
    <location>
        <begin position="221"/>
        <end position="224"/>
    </location>
    <ligand>
        <name>ATP</name>
        <dbReference type="ChEBI" id="CHEBI:30616"/>
    </ligand>
</feature>
<feature type="binding site" evidence="1">
    <location>
        <position position="231"/>
    </location>
    <ligand>
        <name>ATP</name>
        <dbReference type="ChEBI" id="CHEBI:30616"/>
    </ligand>
</feature>
<feature type="binding site" evidence="1">
    <location>
        <position position="233"/>
    </location>
    <ligand>
        <name>substrate</name>
    </ligand>
</feature>
<protein>
    <recommendedName>
        <fullName evidence="1">Pyridoxine/pyridoxal/pyridoxamine kinase</fullName>
        <shortName evidence="1">PN/PL/PM kinase</shortName>
        <ecNumber evidence="1">2.7.1.35</ecNumber>
    </recommendedName>
    <alternativeName>
        <fullName evidence="1">B6-vitamer kinase</fullName>
    </alternativeName>
</protein>
<name>PDXK_ECOHS</name>
<reference key="1">
    <citation type="journal article" date="2008" name="J. Bacteriol.">
        <title>The pangenome structure of Escherichia coli: comparative genomic analysis of E. coli commensal and pathogenic isolates.</title>
        <authorList>
            <person name="Rasko D.A."/>
            <person name="Rosovitz M.J."/>
            <person name="Myers G.S.A."/>
            <person name="Mongodin E.F."/>
            <person name="Fricke W.F."/>
            <person name="Gajer P."/>
            <person name="Crabtree J."/>
            <person name="Sebaihia M."/>
            <person name="Thomson N.R."/>
            <person name="Chaudhuri R."/>
            <person name="Henderson I.R."/>
            <person name="Sperandio V."/>
            <person name="Ravel J."/>
        </authorList>
    </citation>
    <scope>NUCLEOTIDE SEQUENCE [LARGE SCALE GENOMIC DNA]</scope>
    <source>
        <strain>HS</strain>
    </source>
</reference>
<keyword id="KW-0067">ATP-binding</keyword>
<keyword id="KW-0418">Kinase</keyword>
<keyword id="KW-0460">Magnesium</keyword>
<keyword id="KW-0479">Metal-binding</keyword>
<keyword id="KW-0547">Nucleotide-binding</keyword>
<keyword id="KW-0808">Transferase</keyword>
<keyword id="KW-0862">Zinc</keyword>
<accession>A8A2R4</accession>
<gene>
    <name evidence="1" type="primary">pdxK</name>
    <name type="ordered locus">EcHS_A2553</name>
</gene>
<organism>
    <name type="scientific">Escherichia coli O9:H4 (strain HS)</name>
    <dbReference type="NCBI Taxonomy" id="331112"/>
    <lineage>
        <taxon>Bacteria</taxon>
        <taxon>Pseudomonadati</taxon>
        <taxon>Pseudomonadota</taxon>
        <taxon>Gammaproteobacteria</taxon>
        <taxon>Enterobacterales</taxon>
        <taxon>Enterobacteriaceae</taxon>
        <taxon>Escherichia</taxon>
    </lineage>
</organism>
<proteinExistence type="inferred from homology"/>